<feature type="chain" id="PRO_1000124382" description="GTPase Der">
    <location>
        <begin position="1"/>
        <end position="493"/>
    </location>
</feature>
<feature type="domain" description="EngA-type G 1">
    <location>
        <begin position="3"/>
        <end position="166"/>
    </location>
</feature>
<feature type="domain" description="EngA-type G 2">
    <location>
        <begin position="206"/>
        <end position="379"/>
    </location>
</feature>
<feature type="domain" description="KH-like" evidence="1">
    <location>
        <begin position="380"/>
        <end position="464"/>
    </location>
</feature>
<feature type="binding site" evidence="1">
    <location>
        <begin position="9"/>
        <end position="16"/>
    </location>
    <ligand>
        <name>GTP</name>
        <dbReference type="ChEBI" id="CHEBI:37565"/>
        <label>1</label>
    </ligand>
</feature>
<feature type="binding site" evidence="1">
    <location>
        <begin position="56"/>
        <end position="60"/>
    </location>
    <ligand>
        <name>GTP</name>
        <dbReference type="ChEBI" id="CHEBI:37565"/>
        <label>1</label>
    </ligand>
</feature>
<feature type="binding site" evidence="1">
    <location>
        <begin position="118"/>
        <end position="121"/>
    </location>
    <ligand>
        <name>GTP</name>
        <dbReference type="ChEBI" id="CHEBI:37565"/>
        <label>1</label>
    </ligand>
</feature>
<feature type="binding site" evidence="1">
    <location>
        <begin position="212"/>
        <end position="219"/>
    </location>
    <ligand>
        <name>GTP</name>
        <dbReference type="ChEBI" id="CHEBI:37565"/>
        <label>2</label>
    </ligand>
</feature>
<feature type="binding site" evidence="1">
    <location>
        <begin position="259"/>
        <end position="263"/>
    </location>
    <ligand>
        <name>GTP</name>
        <dbReference type="ChEBI" id="CHEBI:37565"/>
        <label>2</label>
    </ligand>
</feature>
<feature type="binding site" evidence="1">
    <location>
        <begin position="324"/>
        <end position="327"/>
    </location>
    <ligand>
        <name>GTP</name>
        <dbReference type="ChEBI" id="CHEBI:37565"/>
        <label>2</label>
    </ligand>
</feature>
<name>DER_VIBA3</name>
<protein>
    <recommendedName>
        <fullName evidence="1">GTPase Der</fullName>
    </recommendedName>
    <alternativeName>
        <fullName evidence="1">GTP-binding protein EngA</fullName>
    </alternativeName>
</protein>
<gene>
    <name evidence="1" type="primary">der</name>
    <name type="synonym">engA</name>
    <name type="ordered locus">VS_0623</name>
</gene>
<evidence type="ECO:0000255" key="1">
    <source>
        <dbReference type="HAMAP-Rule" id="MF_00195"/>
    </source>
</evidence>
<organism>
    <name type="scientific">Vibrio atlanticus (strain LGP32)</name>
    <name type="common">Vibrio splendidus (strain Mel32)</name>
    <dbReference type="NCBI Taxonomy" id="575788"/>
    <lineage>
        <taxon>Bacteria</taxon>
        <taxon>Pseudomonadati</taxon>
        <taxon>Pseudomonadota</taxon>
        <taxon>Gammaproteobacteria</taxon>
        <taxon>Vibrionales</taxon>
        <taxon>Vibrionaceae</taxon>
        <taxon>Vibrio</taxon>
    </lineage>
</organism>
<reference key="1">
    <citation type="submission" date="2009-02" db="EMBL/GenBank/DDBJ databases">
        <title>Vibrio splendidus str. LGP32 complete genome.</title>
        <authorList>
            <person name="Mazel D."/>
            <person name="Le Roux F."/>
        </authorList>
    </citation>
    <scope>NUCLEOTIDE SEQUENCE [LARGE SCALE GENOMIC DNA]</scope>
    <source>
        <strain>LGP32</strain>
    </source>
</reference>
<keyword id="KW-0342">GTP-binding</keyword>
<keyword id="KW-0547">Nucleotide-binding</keyword>
<keyword id="KW-0677">Repeat</keyword>
<keyword id="KW-0690">Ribosome biogenesis</keyword>
<dbReference type="EMBL" id="FM954972">
    <property type="protein sequence ID" value="CAV17618.1"/>
    <property type="molecule type" value="Genomic_DNA"/>
</dbReference>
<dbReference type="SMR" id="B7VJU2"/>
<dbReference type="STRING" id="575788.VS_0623"/>
<dbReference type="KEGG" id="vsp:VS_0623"/>
<dbReference type="eggNOG" id="COG1160">
    <property type="taxonomic scope" value="Bacteria"/>
</dbReference>
<dbReference type="HOGENOM" id="CLU_016077_5_1_6"/>
<dbReference type="Proteomes" id="UP000009100">
    <property type="component" value="Chromosome 1"/>
</dbReference>
<dbReference type="GO" id="GO:0016887">
    <property type="term" value="F:ATP hydrolysis activity"/>
    <property type="evidence" value="ECO:0007669"/>
    <property type="project" value="InterPro"/>
</dbReference>
<dbReference type="GO" id="GO:0005525">
    <property type="term" value="F:GTP binding"/>
    <property type="evidence" value="ECO:0007669"/>
    <property type="project" value="UniProtKB-UniRule"/>
</dbReference>
<dbReference type="GO" id="GO:0043022">
    <property type="term" value="F:ribosome binding"/>
    <property type="evidence" value="ECO:0007669"/>
    <property type="project" value="TreeGrafter"/>
</dbReference>
<dbReference type="GO" id="GO:0042254">
    <property type="term" value="P:ribosome biogenesis"/>
    <property type="evidence" value="ECO:0007669"/>
    <property type="project" value="UniProtKB-KW"/>
</dbReference>
<dbReference type="CDD" id="cd01894">
    <property type="entry name" value="EngA1"/>
    <property type="match status" value="1"/>
</dbReference>
<dbReference type="CDD" id="cd01895">
    <property type="entry name" value="EngA2"/>
    <property type="match status" value="1"/>
</dbReference>
<dbReference type="FunFam" id="3.30.300.20:FF:000004">
    <property type="entry name" value="GTPase Der"/>
    <property type="match status" value="1"/>
</dbReference>
<dbReference type="FunFam" id="3.40.50.300:FF:000040">
    <property type="entry name" value="GTPase Der"/>
    <property type="match status" value="1"/>
</dbReference>
<dbReference type="FunFam" id="3.40.50.300:FF:000057">
    <property type="entry name" value="GTPase Der"/>
    <property type="match status" value="1"/>
</dbReference>
<dbReference type="Gene3D" id="3.30.300.20">
    <property type="match status" value="1"/>
</dbReference>
<dbReference type="Gene3D" id="3.40.50.300">
    <property type="entry name" value="P-loop containing nucleotide triphosphate hydrolases"/>
    <property type="match status" value="2"/>
</dbReference>
<dbReference type="HAMAP" id="MF_00195">
    <property type="entry name" value="GTPase_Der"/>
    <property type="match status" value="1"/>
</dbReference>
<dbReference type="InterPro" id="IPR003593">
    <property type="entry name" value="AAA+_ATPase"/>
</dbReference>
<dbReference type="InterPro" id="IPR031166">
    <property type="entry name" value="G_ENGA"/>
</dbReference>
<dbReference type="InterPro" id="IPR006073">
    <property type="entry name" value="GTP-bd"/>
</dbReference>
<dbReference type="InterPro" id="IPR016484">
    <property type="entry name" value="GTPase_Der"/>
</dbReference>
<dbReference type="InterPro" id="IPR032859">
    <property type="entry name" value="KH_dom-like"/>
</dbReference>
<dbReference type="InterPro" id="IPR015946">
    <property type="entry name" value="KH_dom-like_a/b"/>
</dbReference>
<dbReference type="InterPro" id="IPR027417">
    <property type="entry name" value="P-loop_NTPase"/>
</dbReference>
<dbReference type="InterPro" id="IPR005225">
    <property type="entry name" value="Small_GTP-bd"/>
</dbReference>
<dbReference type="NCBIfam" id="TIGR03594">
    <property type="entry name" value="GTPase_EngA"/>
    <property type="match status" value="1"/>
</dbReference>
<dbReference type="NCBIfam" id="TIGR00231">
    <property type="entry name" value="small_GTP"/>
    <property type="match status" value="2"/>
</dbReference>
<dbReference type="PANTHER" id="PTHR43834">
    <property type="entry name" value="GTPASE DER"/>
    <property type="match status" value="1"/>
</dbReference>
<dbReference type="PANTHER" id="PTHR43834:SF6">
    <property type="entry name" value="GTPASE DER"/>
    <property type="match status" value="1"/>
</dbReference>
<dbReference type="Pfam" id="PF14714">
    <property type="entry name" value="KH_dom-like"/>
    <property type="match status" value="1"/>
</dbReference>
<dbReference type="Pfam" id="PF01926">
    <property type="entry name" value="MMR_HSR1"/>
    <property type="match status" value="2"/>
</dbReference>
<dbReference type="PIRSF" id="PIRSF006485">
    <property type="entry name" value="GTP-binding_EngA"/>
    <property type="match status" value="1"/>
</dbReference>
<dbReference type="PRINTS" id="PR00326">
    <property type="entry name" value="GTP1OBG"/>
</dbReference>
<dbReference type="SMART" id="SM00382">
    <property type="entry name" value="AAA"/>
    <property type="match status" value="2"/>
</dbReference>
<dbReference type="SUPFAM" id="SSF52540">
    <property type="entry name" value="P-loop containing nucleoside triphosphate hydrolases"/>
    <property type="match status" value="2"/>
</dbReference>
<dbReference type="PROSITE" id="PS51712">
    <property type="entry name" value="G_ENGA"/>
    <property type="match status" value="2"/>
</dbReference>
<sequence length="493" mass="55364">MVPVVALVGRPNVGKSTLFNRLTRTRDALVADFPGLTRDRKYGHAHFSEHDFIVIDTGGIDGTEEGVETKMAEQSLAAIDEADVVLFMVDGRAGLTPSDVAIAKHLRQLEKPSMLVVNKVDGIDPDAASADFWQLGVEDMYQIAAAHGRGVTALIDLALNPFAEALKAENGEVSDLTEFEDEEEEQVDFTEEEAEEEFKRLQDQPIKLAIIGRPNVGKSTLTNRILGEERVVVYDMPGTTRDSIYIPMQRDEREYVLIDTAGVRRRKNINETVEKFSVVKTLKAIEDANVVLLLIDARENISDQDLSLLGFALNAGRSIVIAVNKWDGLDNDVKDRVKKELDRRLGFVDFARIHFISALHGTGVGHLFESVQEAYKSATTRVGTSVLTRIMKMATDDHQPPMVRGRRVKLKYAHAGGYNPPIIVIHGNQVRNLPDSYKRFLMNYYRRSLEIMGTPIRIQFQNSENPFEAKTNKLTISQERKRKRMMSMVKGRK</sequence>
<comment type="function">
    <text evidence="1">GTPase that plays an essential role in the late steps of ribosome biogenesis.</text>
</comment>
<comment type="subunit">
    <text evidence="1">Associates with the 50S ribosomal subunit.</text>
</comment>
<comment type="similarity">
    <text evidence="1">Belongs to the TRAFAC class TrmE-Era-EngA-EngB-Septin-like GTPase superfamily. EngA (Der) GTPase family.</text>
</comment>
<accession>B7VJU2</accession>
<proteinExistence type="inferred from homology"/>